<gene>
    <name evidence="25" type="primary">RTT109</name>
    <name evidence="26" type="synonym">KAT11</name>
    <name type="synonym">KIM2</name>
    <name type="synonym">REM50</name>
    <name type="ordered locus">YLL002W</name>
    <name type="ORF">L1377</name>
</gene>
<dbReference type="EC" id="2.3.1.48" evidence="7 10 11 14 20 22 23"/>
<dbReference type="EMBL" id="X91488">
    <property type="protein sequence ID" value="CAA62768.1"/>
    <property type="molecule type" value="Genomic_DNA"/>
</dbReference>
<dbReference type="EMBL" id="Z73107">
    <property type="protein sequence ID" value="CAA97445.1"/>
    <property type="molecule type" value="Genomic_DNA"/>
</dbReference>
<dbReference type="EMBL" id="BK006945">
    <property type="protein sequence ID" value="DAA09317.1"/>
    <property type="molecule type" value="Genomic_DNA"/>
</dbReference>
<dbReference type="PIR" id="S64744">
    <property type="entry name" value="S64744"/>
</dbReference>
<dbReference type="RefSeq" id="NP_013099.1">
    <property type="nucleotide sequence ID" value="NM_001181822.1"/>
</dbReference>
<dbReference type="PDB" id="2RIM">
    <property type="method" value="X-ray"/>
    <property type="resolution" value="2.20 A"/>
    <property type="chains" value="A=1-436"/>
</dbReference>
<dbReference type="PDB" id="2ZFN">
    <property type="method" value="X-ray"/>
    <property type="resolution" value="1.90 A"/>
    <property type="chains" value="A=1-436"/>
</dbReference>
<dbReference type="PDB" id="3CZ7">
    <property type="method" value="X-ray"/>
    <property type="resolution" value="2.00 A"/>
    <property type="chains" value="A=1-127, A=171-403"/>
</dbReference>
<dbReference type="PDB" id="3Q33">
    <property type="method" value="X-ray"/>
    <property type="resolution" value="2.80 A"/>
    <property type="chains" value="A=1-436"/>
</dbReference>
<dbReference type="PDB" id="3Q35">
    <property type="method" value="X-ray"/>
    <property type="resolution" value="3.30 A"/>
    <property type="chains" value="A=1-436"/>
</dbReference>
<dbReference type="PDB" id="3Q66">
    <property type="method" value="X-ray"/>
    <property type="resolution" value="2.70 A"/>
    <property type="chains" value="C=1-436"/>
</dbReference>
<dbReference type="PDB" id="3Q68">
    <property type="method" value="X-ray"/>
    <property type="resolution" value="2.70 A"/>
    <property type="chains" value="C=1-436"/>
</dbReference>
<dbReference type="PDB" id="3QM0">
    <property type="method" value="X-ray"/>
    <property type="resolution" value="3.10 A"/>
    <property type="chains" value="A=1-436"/>
</dbReference>
<dbReference type="PDB" id="6F0Y">
    <property type="method" value="NMR"/>
    <property type="chains" value="B=419-433"/>
</dbReference>
<dbReference type="PDB" id="6O22">
    <property type="method" value="Other"/>
    <property type="chains" value="C=1-436"/>
</dbReference>
<dbReference type="PDBsum" id="2RIM"/>
<dbReference type="PDBsum" id="2ZFN"/>
<dbReference type="PDBsum" id="3CZ7"/>
<dbReference type="PDBsum" id="3Q33"/>
<dbReference type="PDBsum" id="3Q35"/>
<dbReference type="PDBsum" id="3Q66"/>
<dbReference type="PDBsum" id="3Q68"/>
<dbReference type="PDBsum" id="3QM0"/>
<dbReference type="PDBsum" id="6F0Y"/>
<dbReference type="PDBsum" id="6O22"/>
<dbReference type="SASBDB" id="Q07794"/>
<dbReference type="SMR" id="Q07794"/>
<dbReference type="BioGRID" id="31249">
    <property type="interactions" value="598"/>
</dbReference>
<dbReference type="ComplexPortal" id="CPX-1333">
    <property type="entry name" value="RTT109-VPS75 histone acetyltransferase complex"/>
</dbReference>
<dbReference type="DIP" id="DIP-8842N"/>
<dbReference type="FunCoup" id="Q07794">
    <property type="interactions" value="57"/>
</dbReference>
<dbReference type="IntAct" id="Q07794">
    <property type="interactions" value="6"/>
</dbReference>
<dbReference type="MINT" id="Q07794"/>
<dbReference type="STRING" id="4932.YLL002W"/>
<dbReference type="ChEMBL" id="CHEMBL3414417"/>
<dbReference type="GlyGen" id="Q07794">
    <property type="glycosylation" value="2 sites"/>
</dbReference>
<dbReference type="iPTMnet" id="Q07794"/>
<dbReference type="PaxDb" id="4932-YLL002W"/>
<dbReference type="PeptideAtlas" id="Q07794"/>
<dbReference type="EnsemblFungi" id="YLL002W_mRNA">
    <property type="protein sequence ID" value="YLL002W"/>
    <property type="gene ID" value="YLL002W"/>
</dbReference>
<dbReference type="GeneID" id="850658"/>
<dbReference type="KEGG" id="sce:YLL002W"/>
<dbReference type="AGR" id="SGD:S000003925"/>
<dbReference type="SGD" id="S000003925">
    <property type="gene designation" value="RTT109"/>
</dbReference>
<dbReference type="VEuPathDB" id="FungiDB:YLL002W"/>
<dbReference type="eggNOG" id="KOG4534">
    <property type="taxonomic scope" value="Eukaryota"/>
</dbReference>
<dbReference type="GeneTree" id="ENSGT00940000176814"/>
<dbReference type="HOGENOM" id="CLU_050421_0_0_1"/>
<dbReference type="InParanoid" id="Q07794"/>
<dbReference type="OMA" id="FLEHLIV"/>
<dbReference type="OrthoDB" id="3361892at2759"/>
<dbReference type="BioCyc" id="YEAST:G3O-32107-MONOMER"/>
<dbReference type="BRENDA" id="2.3.1.48">
    <property type="organism ID" value="984"/>
</dbReference>
<dbReference type="BioGRID-ORCS" id="850658">
    <property type="hits" value="0 hits in 10 CRISPR screens"/>
</dbReference>
<dbReference type="EvolutionaryTrace" id="Q07794"/>
<dbReference type="PRO" id="PR:Q07794"/>
<dbReference type="Proteomes" id="UP000002311">
    <property type="component" value="Chromosome XII"/>
</dbReference>
<dbReference type="RNAct" id="Q07794">
    <property type="molecule type" value="protein"/>
</dbReference>
<dbReference type="GO" id="GO:0000785">
    <property type="term" value="C:chromatin"/>
    <property type="evidence" value="ECO:0000314"/>
    <property type="project" value="ComplexPortal"/>
</dbReference>
<dbReference type="GO" id="GO:0070775">
    <property type="term" value="C:H3 histone acetyltransferase complex"/>
    <property type="evidence" value="ECO:0000314"/>
    <property type="project" value="UniProtKB"/>
</dbReference>
<dbReference type="GO" id="GO:0005634">
    <property type="term" value="C:nucleus"/>
    <property type="evidence" value="ECO:0000314"/>
    <property type="project" value="SGD"/>
</dbReference>
<dbReference type="GO" id="GO:0010484">
    <property type="term" value="F:histone H3 acetyltransferase activity"/>
    <property type="evidence" value="ECO:0000314"/>
    <property type="project" value="SGD"/>
</dbReference>
<dbReference type="GO" id="GO:0036408">
    <property type="term" value="F:histone H3K14 acetyltransferase activity"/>
    <property type="evidence" value="ECO:0000314"/>
    <property type="project" value="UniProtKB"/>
</dbReference>
<dbReference type="GO" id="GO:0043994">
    <property type="term" value="F:histone H3K23 acetyltransferase activity"/>
    <property type="evidence" value="ECO:0000314"/>
    <property type="project" value="UniProtKB"/>
</dbReference>
<dbReference type="GO" id="GO:0044017">
    <property type="term" value="F:histone H3K27 acetyltransferase activity"/>
    <property type="evidence" value="ECO:0000314"/>
    <property type="project" value="UniProtKB"/>
</dbReference>
<dbReference type="GO" id="GO:0032931">
    <property type="term" value="F:histone H3K56 acetyltransferase activity"/>
    <property type="evidence" value="ECO:0000314"/>
    <property type="project" value="UniProtKB"/>
</dbReference>
<dbReference type="GO" id="GO:0043992">
    <property type="term" value="F:histone H3K9 acetyltransferase activity"/>
    <property type="evidence" value="ECO:0000314"/>
    <property type="project" value="UniProtKB"/>
</dbReference>
<dbReference type="GO" id="GO:0061733">
    <property type="term" value="F:protein-lysine-acetyltransferase activity"/>
    <property type="evidence" value="ECO:0000315"/>
    <property type="project" value="UniProtKB"/>
</dbReference>
<dbReference type="GO" id="GO:0033554">
    <property type="term" value="P:cellular response to stress"/>
    <property type="evidence" value="ECO:0000315"/>
    <property type="project" value="SGD"/>
</dbReference>
<dbReference type="GO" id="GO:0006974">
    <property type="term" value="P:DNA damage response"/>
    <property type="evidence" value="ECO:0000318"/>
    <property type="project" value="GO_Central"/>
</dbReference>
<dbReference type="GO" id="GO:0043007">
    <property type="term" value="P:maintenance of rDNA"/>
    <property type="evidence" value="ECO:0000316"/>
    <property type="project" value="SGD"/>
</dbReference>
<dbReference type="GO" id="GO:0006334">
    <property type="term" value="P:nucleosome assembly"/>
    <property type="evidence" value="ECO:0000314"/>
    <property type="project" value="UniProtKB"/>
</dbReference>
<dbReference type="GO" id="GO:0036211">
    <property type="term" value="P:protein modification process"/>
    <property type="evidence" value="ECO:0000314"/>
    <property type="project" value="UniProtKB"/>
</dbReference>
<dbReference type="GO" id="GO:2001032">
    <property type="term" value="P:regulation of double-strand break repair via nonhomologous end joining"/>
    <property type="evidence" value="ECO:0000315"/>
    <property type="project" value="SGD"/>
</dbReference>
<dbReference type="GO" id="GO:0010468">
    <property type="term" value="P:regulation of gene expression"/>
    <property type="evidence" value="ECO:0000315"/>
    <property type="project" value="SGD"/>
</dbReference>
<dbReference type="GO" id="GO:0006357">
    <property type="term" value="P:regulation of transcription by RNA polymerase II"/>
    <property type="evidence" value="ECO:0000315"/>
    <property type="project" value="SGD"/>
</dbReference>
<dbReference type="GO" id="GO:1990414">
    <property type="term" value="P:replication-born double-strand break repair via sister chromatid exchange"/>
    <property type="evidence" value="ECO:0000315"/>
    <property type="project" value="SGD"/>
</dbReference>
<dbReference type="GO" id="GO:0010526">
    <property type="term" value="P:transposable element silencing"/>
    <property type="evidence" value="ECO:0000315"/>
    <property type="project" value="SGD"/>
</dbReference>
<dbReference type="IDEAL" id="IID50225"/>
<dbReference type="InterPro" id="IPR051236">
    <property type="entry name" value="HAT_RTT109-like"/>
</dbReference>
<dbReference type="InterPro" id="IPR013178">
    <property type="entry name" value="Histone_AcTrfase_Rtt109/CBP"/>
</dbReference>
<dbReference type="InterPro" id="IPR016849">
    <property type="entry name" value="Rtt109"/>
</dbReference>
<dbReference type="PANTHER" id="PTHR31571">
    <property type="entry name" value="ALTERED INHERITANCE OF MITOCHONDRIA PROTEIN 6"/>
    <property type="match status" value="1"/>
</dbReference>
<dbReference type="PANTHER" id="PTHR31571:SF2">
    <property type="entry name" value="HISTONE ACETYLTRANSFERASE RTT109"/>
    <property type="match status" value="1"/>
</dbReference>
<dbReference type="Pfam" id="PF08214">
    <property type="entry name" value="HAT_KAT11"/>
    <property type="match status" value="1"/>
</dbReference>
<dbReference type="PIRSF" id="PIRSF027124">
    <property type="entry name" value="Histone_acetylase_Rtt109"/>
    <property type="match status" value="1"/>
</dbReference>
<dbReference type="SMART" id="SM01250">
    <property type="entry name" value="KAT11"/>
    <property type="match status" value="1"/>
</dbReference>
<dbReference type="PROSITE" id="PS51728">
    <property type="entry name" value="RTT109_HAT"/>
    <property type="match status" value="1"/>
</dbReference>
<organism>
    <name type="scientific">Saccharomyces cerevisiae (strain ATCC 204508 / S288c)</name>
    <name type="common">Baker's yeast</name>
    <dbReference type="NCBI Taxonomy" id="559292"/>
    <lineage>
        <taxon>Eukaryota</taxon>
        <taxon>Fungi</taxon>
        <taxon>Dikarya</taxon>
        <taxon>Ascomycota</taxon>
        <taxon>Saccharomycotina</taxon>
        <taxon>Saccharomycetes</taxon>
        <taxon>Saccharomycetales</taxon>
        <taxon>Saccharomycetaceae</taxon>
        <taxon>Saccharomyces</taxon>
    </lineage>
</organism>
<feature type="chain" id="PRO_0000268738" description="Histone acetyltransferase RTT109">
    <location>
        <begin position="1"/>
        <end position="436"/>
    </location>
</feature>
<feature type="domain" description="Rtt109-type HAT" evidence="1">
    <location>
        <begin position="2"/>
        <end position="404"/>
    </location>
</feature>
<feature type="region of interest" description="Interaction with VPS75" evidence="15 20 21">
    <location>
        <begin position="128"/>
        <end position="170"/>
    </location>
</feature>
<feature type="region of interest" description="Interaction with ASF1" evidence="24">
    <location>
        <begin position="419"/>
        <end position="433"/>
    </location>
</feature>
<feature type="active site" description="Proton donor/acceptor" evidence="14">
    <location>
        <position position="288"/>
    </location>
</feature>
<feature type="binding site" evidence="12 14 15 20 29 30 31 32 35">
    <location>
        <begin position="88"/>
        <end position="90"/>
    </location>
    <ligand>
        <name>acetyl-CoA</name>
        <dbReference type="ChEBI" id="CHEBI:57288"/>
    </ligand>
</feature>
<feature type="binding site" evidence="12 14 15 20 29 30 31 32 35">
    <location>
        <begin position="97"/>
        <end position="101"/>
    </location>
    <ligand>
        <name>acetyl-CoA</name>
        <dbReference type="ChEBI" id="CHEBI:57288"/>
    </ligand>
</feature>
<feature type="binding site" evidence="12 35">
    <location>
        <position position="192"/>
    </location>
    <ligand>
        <name>acetyl-CoA</name>
        <dbReference type="ChEBI" id="CHEBI:57288"/>
    </ligand>
</feature>
<feature type="binding site" evidence="12 20 31 32 35">
    <location>
        <position position="196"/>
    </location>
    <ligand>
        <name>acetyl-CoA</name>
        <dbReference type="ChEBI" id="CHEBI:57288"/>
    </ligand>
</feature>
<feature type="binding site" evidence="12 14 15 20 29 30 31 32 35">
    <location>
        <begin position="211"/>
        <end position="213"/>
    </location>
    <ligand>
        <name>acetyl-CoA</name>
        <dbReference type="ChEBI" id="CHEBI:57288"/>
    </ligand>
</feature>
<feature type="binding site" evidence="14 15 20 29 30 31 32">
    <location>
        <position position="221"/>
    </location>
    <ligand>
        <name>acetyl-CoA</name>
        <dbReference type="ChEBI" id="CHEBI:57288"/>
    </ligand>
</feature>
<feature type="modified residue" description="N6-acetyllysine; by autocatalysis" evidence="12 14 15">
    <location>
        <position position="290"/>
    </location>
</feature>
<feature type="mutagenesis site" description="Mildly increases sensitivity to methyl methane sulfonate, camptothecin and hydroxyurea (genotoxic stress)." evidence="15">
    <original>E</original>
    <variation>A</variation>
    <location>
        <position position="66"/>
    </location>
</feature>
<feature type="mutagenesis site" description="Increases sensitivity to methyl methane sulfonate, camptothecin and hydroxyurea (genotoxic stress)." evidence="15">
    <original>F</original>
    <variation>A</variation>
    <location>
        <position position="84"/>
    </location>
</feature>
<feature type="mutagenesis site" description="Abolishes histone acetylase activity." evidence="8 14">
    <original>D</original>
    <variation>A</variation>
    <location>
        <position position="89"/>
    </location>
</feature>
<feature type="mutagenesis site" description="Decreases histone acetylase activity. Decreases expression (at protein level). Increases sensitivity to methyl methane sulfonate and hydroxyurea (genotoxic stress)." evidence="12">
    <original>D</original>
    <variation>N</variation>
    <location>
        <position position="89"/>
    </location>
</feature>
<feature type="mutagenesis site" description="Decreases binding and activity stimulation by VPS75. Decreases acetylation of histone H3 'Lys-9' and 'Lys-27'." evidence="20">
    <original>L</original>
    <variation>D</variation>
    <location>
        <position position="148"/>
    </location>
</feature>
<feature type="mutagenesis site" description="Decreases binding and activity stimulation by VPS75." evidence="20">
    <original>IL</original>
    <variation>DD</variation>
    <location>
        <begin position="150"/>
        <end position="151"/>
    </location>
</feature>
<feature type="mutagenesis site" description="Decreases histone acetylase activity." evidence="14 20">
    <original>R</original>
    <variation>A</variation>
    <variation>E</variation>
    <location>
        <position position="194"/>
    </location>
</feature>
<feature type="mutagenesis site" description="Decreases histone acetylase activity. Increases sensitivity to methyl methane sulfonate and hydroxyurea (genotoxic stress)." evidence="12">
    <original>Y</original>
    <variation>S</variation>
    <location>
        <position position="199"/>
    </location>
</feature>
<feature type="mutagenesis site" description="Decreases histone acetylase activity; when associated with A-222." evidence="14">
    <original>H</original>
    <variation>A</variation>
    <location>
        <position position="211"/>
    </location>
</feature>
<feature type="mutagenesis site" description="Decreases histone acetylase activity; when associated with A-211." evidence="14">
    <original>W</original>
    <variation>A</variation>
    <location>
        <position position="221"/>
    </location>
</feature>
<feature type="mutagenesis site" description="Decreases histone acetylase activity. Increases sensitivity to methyl methane sulfonate and hydroxyurea (genotoxic stress)." evidence="12">
    <original>W</original>
    <variation>F</variation>
    <location>
        <position position="222"/>
    </location>
</feature>
<feature type="mutagenesis site" description="Increases sensitivity to methyl methane sulfonate, camptothecin and hydroxyurea (genotoxic stress)." evidence="15">
    <original>F</original>
    <variation>A</variation>
    <location>
        <position position="285"/>
    </location>
</feature>
<feature type="mutagenesis site" description="Decreases histone acetylase activity." evidence="8 19">
    <original>DD</original>
    <variation>AA</variation>
    <variation>NN</variation>
    <location>
        <begin position="287"/>
        <end position="288"/>
    </location>
</feature>
<feature type="mutagenesis site" description="Decreases histone acetylase activity." evidence="12 19">
    <original>D</original>
    <variation>A</variation>
    <variation>N</variation>
    <location>
        <position position="287"/>
    </location>
</feature>
<feature type="mutagenesis site" description="Increases sensitivity to methyl methane sulfonate, camptothecin and hydroxyurea (genotoxic stress)." evidence="15">
    <original>D</original>
    <variation>A</variation>
    <location>
        <position position="287"/>
    </location>
</feature>
<feature type="mutagenesis site" description="Abolishes histone acetylase activity. Increases sensitivity to methyl methane sulfonate, camptothecin and hydroxyurea (genotoxic stress)." evidence="14 15">
    <original>D</original>
    <variation>A</variation>
    <location>
        <position position="288"/>
    </location>
</feature>
<feature type="mutagenesis site" description="Decreases histone acetylase activity." evidence="19">
    <original>D</original>
    <variation>N</variation>
    <location>
        <position position="288"/>
    </location>
</feature>
<feature type="mutagenesis site" description="Abolishes histone acetylase activity. Increases sensitivity to methyl methane sulfonate, camptothecin and hydroxyurea (genotoxic stress)." evidence="14 15">
    <original>K</original>
    <variation>A</variation>
    <location>
        <position position="290"/>
    </location>
</feature>
<feature type="mutagenesis site" description="Increases sensitivity to methyl methane sulfonate, camptothecin and hydroxyurea (genotoxic stress)." evidence="15">
    <original>K</original>
    <variation>E</variation>
    <variation>W</variation>
    <location>
        <position position="290"/>
    </location>
</feature>
<feature type="mutagenesis site" description="Normal histone acetylase activity. Increases sensitivity to methyl methane sulfonate, camptothecin and hydroxyurea (genotoxic stress)." evidence="12 15">
    <original>K</original>
    <variation>R</variation>
    <location>
        <position position="290"/>
    </location>
</feature>
<feature type="mutagenesis site" description="Decreases activity stimulation by ASF1." evidence="20">
    <original>R</original>
    <variation>E</variation>
    <location>
        <position position="292"/>
    </location>
</feature>
<feature type="mutagenesis site" description="Increases sensitivity to methyl methane sulfonate, camptothecin and hydroxyurea (genotoxic stress)." evidence="15">
    <original>W</original>
    <variation>A</variation>
    <location>
        <position position="312"/>
    </location>
</feature>
<feature type="mutagenesis site" description="Decreases binding and activity stimulation by VPS75." evidence="20">
    <original>RK</original>
    <variation>EE</variation>
    <location>
        <begin position="355"/>
        <end position="356"/>
    </location>
</feature>
<feature type="mutagenesis site" description="Decreases histone acetylase activity." evidence="20">
    <original>EEYD</original>
    <variation>RRYR</variation>
    <location>
        <begin position="368"/>
        <end position="371"/>
    </location>
</feature>
<feature type="mutagenesis site" description="Decreases histone acetylase activity." evidence="20">
    <original>E</original>
    <variation>R</variation>
    <location>
        <position position="368"/>
    </location>
</feature>
<feature type="mutagenesis site" description="Decreases activity stimulation by VPS75." evidence="20">
    <original>E</original>
    <variation>R</variation>
    <location>
        <position position="374"/>
    </location>
</feature>
<feature type="mutagenesis site" description="Decreases binding and activity stimulation by VPS75. Decreases acetylation of histone H3 'Lys-9' and 'Lys-27'." evidence="20">
    <original>EAFTN</original>
    <variation>RAFTR</variation>
    <location>
        <begin position="378"/>
        <end position="382"/>
    </location>
</feature>
<feature type="mutagenesis site" description="Decreases activity stimulation by VPS75." evidence="20">
    <original>E</original>
    <variation>R</variation>
    <location>
        <position position="378"/>
    </location>
</feature>
<feature type="mutagenesis site" description="Abolishes ASF1 binding." evidence="24">
    <location>
        <begin position="425"/>
        <end position="436"/>
    </location>
</feature>
<feature type="helix" evidence="38">
    <location>
        <begin position="3"/>
        <end position="10"/>
    </location>
</feature>
<feature type="strand" evidence="38">
    <location>
        <begin position="16"/>
        <end position="23"/>
    </location>
</feature>
<feature type="strand" evidence="38">
    <location>
        <begin position="27"/>
        <end position="29"/>
    </location>
</feature>
<feature type="strand" evidence="41">
    <location>
        <begin position="37"/>
        <end position="40"/>
    </location>
</feature>
<feature type="strand" evidence="38">
    <location>
        <begin position="44"/>
        <end position="57"/>
    </location>
</feature>
<feature type="strand" evidence="38">
    <location>
        <begin position="60"/>
        <end position="77"/>
    </location>
</feature>
<feature type="strand" evidence="38">
    <location>
        <begin position="79"/>
        <end position="90"/>
    </location>
</feature>
<feature type="helix" evidence="38">
    <location>
        <begin position="100"/>
        <end position="112"/>
    </location>
</feature>
<feature type="helix" evidence="38">
    <location>
        <begin position="117"/>
        <end position="120"/>
    </location>
</feature>
<feature type="strand" evidence="38">
    <location>
        <begin position="121"/>
        <end position="124"/>
    </location>
</feature>
<feature type="helix" evidence="38">
    <location>
        <begin position="135"/>
        <end position="137"/>
    </location>
</feature>
<feature type="helix" evidence="40">
    <location>
        <begin position="144"/>
        <end position="158"/>
    </location>
</feature>
<feature type="strand" evidence="40">
    <location>
        <begin position="159"/>
        <end position="161"/>
    </location>
</feature>
<feature type="helix" evidence="40">
    <location>
        <begin position="164"/>
        <end position="167"/>
    </location>
</feature>
<feature type="helix" evidence="40">
    <location>
        <begin position="169"/>
        <end position="174"/>
    </location>
</feature>
<feature type="strand" evidence="40">
    <location>
        <begin position="175"/>
        <end position="177"/>
    </location>
</feature>
<feature type="helix" evidence="42">
    <location>
        <begin position="182"/>
        <end position="184"/>
    </location>
</feature>
<feature type="strand" evidence="38">
    <location>
        <begin position="186"/>
        <end position="193"/>
    </location>
</feature>
<feature type="helix" evidence="40">
    <location>
        <begin position="195"/>
        <end position="197"/>
    </location>
</feature>
<feature type="strand" evidence="38">
    <location>
        <begin position="199"/>
        <end position="201"/>
    </location>
</feature>
<feature type="helix" evidence="38">
    <location>
        <begin position="204"/>
        <end position="206"/>
    </location>
</feature>
<feature type="strand" evidence="42">
    <location>
        <begin position="207"/>
        <end position="209"/>
    </location>
</feature>
<feature type="helix" evidence="38">
    <location>
        <begin position="215"/>
        <end position="233"/>
    </location>
</feature>
<feature type="strand" evidence="38">
    <location>
        <begin position="239"/>
        <end position="243"/>
    </location>
</feature>
<feature type="helix" evidence="38">
    <location>
        <begin position="249"/>
        <end position="256"/>
    </location>
</feature>
<feature type="strand" evidence="41">
    <location>
        <begin position="259"/>
        <end position="262"/>
    </location>
</feature>
<feature type="strand" evidence="38">
    <location>
        <begin position="264"/>
        <end position="267"/>
    </location>
</feature>
<feature type="helix" evidence="39">
    <location>
        <begin position="273"/>
        <end position="276"/>
    </location>
</feature>
<feature type="helix" evidence="38">
    <location>
        <begin position="278"/>
        <end position="280"/>
    </location>
</feature>
<feature type="helix" evidence="38">
    <location>
        <begin position="292"/>
        <end position="299"/>
    </location>
</feature>
<feature type="turn" evidence="38">
    <location>
        <begin position="303"/>
        <end position="305"/>
    </location>
</feature>
<feature type="helix" evidence="38">
    <location>
        <begin position="308"/>
        <end position="318"/>
    </location>
</feature>
<feature type="helix" evidence="38">
    <location>
        <begin position="320"/>
        <end position="323"/>
    </location>
</feature>
<feature type="turn" evidence="40">
    <location>
        <begin position="324"/>
        <end position="326"/>
    </location>
</feature>
<feature type="strand" evidence="38">
    <location>
        <begin position="328"/>
        <end position="334"/>
    </location>
</feature>
<feature type="strand" evidence="38">
    <location>
        <begin position="336"/>
        <end position="338"/>
    </location>
</feature>
<feature type="turn" evidence="38">
    <location>
        <begin position="346"/>
        <end position="348"/>
    </location>
</feature>
<feature type="helix" evidence="38">
    <location>
        <begin position="355"/>
        <end position="366"/>
    </location>
</feature>
<feature type="helix" evidence="38">
    <location>
        <begin position="373"/>
        <end position="391"/>
    </location>
</feature>
<feature type="strand" evidence="38">
    <location>
        <begin position="396"/>
        <end position="399"/>
    </location>
</feature>
<feature type="helix" evidence="40">
    <location>
        <begin position="411"/>
        <end position="423"/>
    </location>
</feature>
<feature type="strand" evidence="43">
    <location>
        <begin position="427"/>
        <end position="429"/>
    </location>
</feature>
<keyword id="KW-0002">3D-structure</keyword>
<keyword id="KW-0007">Acetylation</keyword>
<keyword id="KW-0227">DNA damage</keyword>
<keyword id="KW-0539">Nucleus</keyword>
<keyword id="KW-1185">Reference proteome</keyword>
<keyword id="KW-0804">Transcription</keyword>
<keyword id="KW-0805">Transcription regulation</keyword>
<keyword id="KW-0808">Transferase</keyword>
<comment type="function">
    <text evidence="2 6 8 9 10 12 13 14 15 16 17 18 19 20 22 23">Histone chaperone-dependent acetylase that modifies 'Lys-9', 'Lys-14', 'Lys-23', 'Lys-27', and 'Lys-56' on histone H3 (H3K9Ac, H3K14Ac and H3K23Ac, H3K27Ac, and H3K56Ac) to promote nucleosome assembly, genomic stability, DNA repair and transcriptional regulation during mitotic S-phase (PubMed:17046836, PubMed:17272723, PubMed:17320445, PubMed:17369253, PubMed:18723682, PubMed:19172748, PubMed:19683497, PubMed:20560668, PubMed:21256037, PubMed:29300933, PubMed:31194870). Its residue selectivity is influenced by the acetylation status of histone H3, and also the presence of histone chaperone ASF1 that shifts selectivity to 'Lys-56' when H3K14Ac is already present (PubMed:31194870). H3K56 acetylation weakens the interaction between the histone core and the surrounding DNA in the nucleosomal particle and drives chromatin disassembly (PubMed:18577595). Autoacetylates (PubMed:18568037, PubMed:18707894, PubMed:18719104). Independently of acetyltransferase activity, stimulates histone deposition by VPS75 (PubMed:19172748). Involved in regulation of Ty1 transposition (PubMed:11779788).</text>
</comment>
<comment type="catalytic activity">
    <reaction evidence="7 10 11 12 14 17 20 22 23">
        <text>L-lysyl-[histone] + acetyl-CoA = N(6)-acetyl-L-lysyl-[histone] + CoA + H(+)</text>
        <dbReference type="Rhea" id="RHEA:21992"/>
        <dbReference type="Rhea" id="RHEA-COMP:9845"/>
        <dbReference type="Rhea" id="RHEA-COMP:11338"/>
        <dbReference type="ChEBI" id="CHEBI:15378"/>
        <dbReference type="ChEBI" id="CHEBI:29969"/>
        <dbReference type="ChEBI" id="CHEBI:57287"/>
        <dbReference type="ChEBI" id="CHEBI:57288"/>
        <dbReference type="ChEBI" id="CHEBI:61930"/>
        <dbReference type="EC" id="2.3.1.48"/>
    </reaction>
    <physiologicalReaction direction="left-to-right" evidence="7 10 11 12 14 17 20 22 23">
        <dbReference type="Rhea" id="RHEA:21993"/>
    </physiologicalReaction>
</comment>
<comment type="catalytic activity">
    <reaction evidence="12 14 15">
        <text>L-lysyl-[protein] + acetyl-CoA = N(6)-acetyl-L-lysyl-[protein] + CoA + H(+)</text>
        <dbReference type="Rhea" id="RHEA:45948"/>
        <dbReference type="Rhea" id="RHEA-COMP:9752"/>
        <dbReference type="Rhea" id="RHEA-COMP:10731"/>
        <dbReference type="ChEBI" id="CHEBI:15378"/>
        <dbReference type="ChEBI" id="CHEBI:29969"/>
        <dbReference type="ChEBI" id="CHEBI:57287"/>
        <dbReference type="ChEBI" id="CHEBI:57288"/>
        <dbReference type="ChEBI" id="CHEBI:61930"/>
        <dbReference type="EC" id="2.3.1.48"/>
    </reaction>
    <physiologicalReaction direction="left-to-right" evidence="12 14 15">
        <dbReference type="Rhea" id="RHEA:45949"/>
    </physiologicalReaction>
</comment>
<comment type="biophysicochemical properties">
    <kinetics>
        <KM evidence="19">0.3 uM for acetyl-CoA (at pH 7.5, 25 degrees Celsius in the presence of VPS75 chaperone)</KM>
        <KM evidence="12">8 uM for acetyl-CoA (at pH 8, 30 degrees Celsius in the presence of VPS75 chaperone)</KM>
        <KM evidence="17">1 uM for acetyl-CoA (at pH 7.0, 25 degrees Celsius in the presence of VPS75 chaperone)</KM>
        <KM evidence="17">0.3 uM for acetyl-CoA (at pH 7.0, 25 degrees Celsius)</KM>
        <KM evidence="19">7 uM for histone H3 (at pH 7.5, 25 degrees Celsius in the presence of VPS75 chaperone)</KM>
        <KM evidence="12">8.5 uM for histone H3 (at pH 8, 30 degrees Celsius in the presence of VPS75 chaperone)</KM>
        <KM evidence="17">8.1 uM for histone H3 (at pH 7.0, 25 degrees Celsius)</KM>
        <KM evidence="17">1.4 uM for histone H3/H4 (at pH 7.0, 25 degrees Celsius in the presence of VPS75 chaperone)</KM>
        <KM evidence="17">2.9 uM for histone H3/H4 (at pH 7.0, 25 degrees Celsius)</KM>
        <text evidence="12 17 19">kcat is 0.11 sec(-1) with acetyl-CoA as substrate (at pH 7.5, 25 degrees Celsius in the presence of VPS75 chaperone) (PubMed:20560668). kcat is 0.19 sec(-1) with acetyl-CoA as substrate (at pH 7.0, 25 degrees Celsius in the presence of VPS75 chaperone) (PubMed:19172748). kcat is 0.0017 sec(-1) with acetyl-CoA as substrate (at pH 7.0, 25 degrees Celsius) (PubMed:19172748). kcat is 0.62 sec(-1) with histone H3 as substrate (at pH 7.5, 25 degrees Celsius in the presence of VPS75 chaperone) (PubMed:20560668). kcat is 22.5 min(-1) with histone H3 (at pH 8, 30 degrees Celsius in the presence of VPS75 chaperone) (PubMed:18568037). kcat is 0.0033 sec(-1) with acetyl-CoA as substrate (at pH 7.0, 25 degrees Celsius) (PubMed:19172748). kcat is 0.11 sec(-1) with histone H3/H4 as substrate (at pH 7.0, 25 degrees Celsius in the presence of VPS75 chaperone) (PubMed:19172748). kcat is 0.0033 sec(-1) with histone H3/H4 as substrate (at pH 7.0, 25 degrees Celsius) (PubMed:19172748).</text>
    </kinetics>
    <phDependence>
        <text evidence="19">Optimum pH is &gt;8.5.</text>
    </phDependence>
</comment>
<comment type="subunit">
    <text evidence="8 9 10 11 15 16 17 19 20 21 22 24">Forms a complex composed of two RTT109 subunits and one VPS75 homodimer; each RTT109 subunit interacts predominantly with VPS75 instead of interacting with the other RTT109 subunit (PubMed:17320445, PubMed:18719104, PubMed:20560668, PubMed:21256037, PubMed:31387991). Interacts with VPS75; the interaction is direct (PubMed:17272723, PubMed:17320445, PubMed:17369253, PubMed:17690098, PubMed:18719104, PubMed:18723682, PubMed:20560668, PubMed:21256037, PubMed:31387991). Interacts (via C-terminus) with ASF1; the interaction is direct (PubMed:17320445, PubMed:17690098, PubMed:29300933, PubMed:31387991). Interacts with histone H3/H4 heterodimers via histone H3 (PubMed:19172748, PubMed:21454705).</text>
</comment>
<comment type="interaction">
    <interactant intactId="EBI-2887026">
        <id>Q07794</id>
    </interactant>
    <interactant intactId="EBI-11850">
        <id>P25293</id>
        <label>NAP1</label>
    </interactant>
    <organismsDiffer>false</organismsDiffer>
    <experiments>2</experiments>
</comment>
<comment type="interaction">
    <interactant intactId="EBI-2887026">
        <id>Q07794</id>
    </interactant>
    <interactant intactId="EBI-29225">
        <id>P53853</id>
        <label>VPS75</label>
    </interactant>
    <organismsDiffer>false</organismsDiffer>
    <experiments>21</experiments>
</comment>
<comment type="subcellular location">
    <subcellularLocation>
        <location evidence="3 5">Nucleus</location>
    </subcellularLocation>
</comment>
<comment type="induction">
    <text evidence="5">Expression peaks in cell cycle G1.</text>
</comment>
<comment type="disruption phenotype">
    <text evidence="12 15 17 18 20">Abolishes acetylation of histone H3 'Lys-56'; simultaneous disruption of GCN5 also abolishes acetylation of histone H3 'Lys-9' and 'Lys-27' (PubMed:21256037). Decreases acetylation of histone H3 'Lys-9' and 'Lys-23' (PubMed:19172748). Decreases HTA1 RNA level; simultaneous disruption of HIR1 or RTT106 alleviates the effect (PubMed:19683497). Increases sensitivity to methyl methane sulfonate, hydroxyurea, and camptothecin (genotoxic stress) (PubMed:18568037, PubMed:18719104).</text>
</comment>
<comment type="miscellaneous">
    <text evidence="4">Present with 1140 molecules/cell in log phase SD medium.</text>
</comment>
<comment type="similarity">
    <text evidence="27">Belongs to the RTT109 family.</text>
</comment>
<reference key="1">
    <citation type="journal article" date="1996" name="Yeast">
        <title>Sequence analysis of the CEN12 region of Saccharomyces cerevisiae on a 43.7 kb fragment of chromosome XII including an open reading frame homologous to the human cystic fibrosis transmembrane conductance regulator protein CFTR.</title>
        <authorList>
            <person name="Miosga T."/>
            <person name="Zimmermann F.K."/>
        </authorList>
    </citation>
    <scope>NUCLEOTIDE SEQUENCE [GENOMIC DNA]</scope>
    <source>
        <strain>ATCC 204511 / S288c / AB972</strain>
    </source>
</reference>
<reference key="2">
    <citation type="journal article" date="1997" name="Nature">
        <title>The nucleotide sequence of Saccharomyces cerevisiae chromosome XII.</title>
        <authorList>
            <person name="Johnston M."/>
            <person name="Hillier L.W."/>
            <person name="Riles L."/>
            <person name="Albermann K."/>
            <person name="Andre B."/>
            <person name="Ansorge W."/>
            <person name="Benes V."/>
            <person name="Brueckner M."/>
            <person name="Delius H."/>
            <person name="Dubois E."/>
            <person name="Duesterhoeft A."/>
            <person name="Entian K.-D."/>
            <person name="Floeth M."/>
            <person name="Goffeau A."/>
            <person name="Hebling U."/>
            <person name="Heumann K."/>
            <person name="Heuss-Neitzel D."/>
            <person name="Hilbert H."/>
            <person name="Hilger F."/>
            <person name="Kleine K."/>
            <person name="Koetter P."/>
            <person name="Louis E.J."/>
            <person name="Messenguy F."/>
            <person name="Mewes H.-W."/>
            <person name="Miosga T."/>
            <person name="Moestl D."/>
            <person name="Mueller-Auer S."/>
            <person name="Nentwich U."/>
            <person name="Obermaier B."/>
            <person name="Piravandi E."/>
            <person name="Pohl T.M."/>
            <person name="Portetelle D."/>
            <person name="Purnelle B."/>
            <person name="Rechmann S."/>
            <person name="Rieger M."/>
            <person name="Rinke M."/>
            <person name="Rose M."/>
            <person name="Scharfe M."/>
            <person name="Scherens B."/>
            <person name="Scholler P."/>
            <person name="Schwager C."/>
            <person name="Schwarz S."/>
            <person name="Underwood A.P."/>
            <person name="Urrestarazu L.A."/>
            <person name="Vandenbol M."/>
            <person name="Verhasselt P."/>
            <person name="Vierendeels F."/>
            <person name="Voet M."/>
            <person name="Volckaert G."/>
            <person name="Voss H."/>
            <person name="Wambutt R."/>
            <person name="Wedler E."/>
            <person name="Wedler H."/>
            <person name="Zimmermann F.K."/>
            <person name="Zollner A."/>
            <person name="Hani J."/>
            <person name="Hoheisel J.D."/>
        </authorList>
    </citation>
    <scope>NUCLEOTIDE SEQUENCE [LARGE SCALE GENOMIC DNA]</scope>
    <source>
        <strain>ATCC 204508 / S288c</strain>
    </source>
</reference>
<reference key="3">
    <citation type="journal article" date="2014" name="G3 (Bethesda)">
        <title>The reference genome sequence of Saccharomyces cerevisiae: Then and now.</title>
        <authorList>
            <person name="Engel S.R."/>
            <person name="Dietrich F.S."/>
            <person name="Fisk D.G."/>
            <person name="Binkley G."/>
            <person name="Balakrishnan R."/>
            <person name="Costanzo M.C."/>
            <person name="Dwight S.S."/>
            <person name="Hitz B.C."/>
            <person name="Karra K."/>
            <person name="Nash R.S."/>
            <person name="Weng S."/>
            <person name="Wong E.D."/>
            <person name="Lloyd P."/>
            <person name="Skrzypek M.S."/>
            <person name="Miyasato S.R."/>
            <person name="Simison M."/>
            <person name="Cherry J.M."/>
        </authorList>
    </citation>
    <scope>GENOME REANNOTATION</scope>
    <source>
        <strain>ATCC 204508 / S288c</strain>
    </source>
</reference>
<reference key="4">
    <citation type="journal article" date="2001" name="Genetics">
        <title>Multiple regulators of Ty1 transposition in Saccharomyces cerevisiae have conserved roles in genome maintenance.</title>
        <authorList>
            <person name="Scholes D.T."/>
            <person name="Banerjee M."/>
            <person name="Bowen B."/>
            <person name="Curcio M.J."/>
        </authorList>
    </citation>
    <scope>FUNCTION</scope>
</reference>
<reference key="5">
    <citation type="journal article" date="2003" name="Nature">
        <title>Global analysis of protein localization in budding yeast.</title>
        <authorList>
            <person name="Huh W.-K."/>
            <person name="Falvo J.V."/>
            <person name="Gerke L.C."/>
            <person name="Carroll A.S."/>
            <person name="Howson R.W."/>
            <person name="Weissman J.S."/>
            <person name="O'Shea E.K."/>
        </authorList>
    </citation>
    <scope>SUBCELLULAR LOCATION [LARGE SCALE ANALYSIS]</scope>
</reference>
<reference key="6">
    <citation type="journal article" date="2003" name="Nature">
        <title>Global analysis of protein expression in yeast.</title>
        <authorList>
            <person name="Ghaemmaghami S."/>
            <person name="Huh W.-K."/>
            <person name="Bower K."/>
            <person name="Howson R.W."/>
            <person name="Belle A."/>
            <person name="Dephoure N."/>
            <person name="O'Shea E.K."/>
            <person name="Weissman J.S."/>
        </authorList>
    </citation>
    <scope>LEVEL OF PROTEIN EXPRESSION [LARGE SCALE ANALYSIS]</scope>
</reference>
<reference key="7">
    <citation type="journal article" date="2004" name="Yeast">
        <title>Localization of proteins that are coordinately expressed with Cln2 during the cell cycle.</title>
        <authorList>
            <person name="Sundin B.A."/>
            <person name="Chiu C.-H."/>
            <person name="Riffle M."/>
            <person name="Davis T.N."/>
            <person name="Muller E.G.D."/>
        </authorList>
    </citation>
    <scope>INDUCTION</scope>
    <scope>SUBCELLULAR LOCATION</scope>
</reference>
<reference key="8">
    <citation type="journal article" date="2006" name="J. Biol. Chem.">
        <title>Rtt109 is required for proper H3K56 acetylation: a chromatin mark associated with the elongating RNA polymerase II.</title>
        <authorList>
            <person name="Schneider J."/>
            <person name="Bajwa P."/>
            <person name="Johnson F.C."/>
            <person name="Bhaumik S.R."/>
            <person name="Shilatifard A."/>
        </authorList>
    </citation>
    <scope>FUNCTION</scope>
</reference>
<reference key="9">
    <citation type="journal article" date="2007" name="J. Biol. Chem.">
        <title>The Rtt109-Vps75 histone acetyltransferase complex acetylates non-nucleosomal histone H3.</title>
        <authorList>
            <person name="Han J."/>
            <person name="Zhou H."/>
            <person name="Li Z."/>
            <person name="Xu R.-M."/>
            <person name="Zhang Z."/>
        </authorList>
    </citation>
    <scope>FUNCTION</scope>
    <scope>CATALYTIC ACTIVITY</scope>
    <scope>INTERACTION WITH VPS75</scope>
</reference>
<reference key="10">
    <citation type="journal article" date="2007" name="J. Biol. Chem.">
        <title>Acetylation of lysine 56 of histone H3 catalyzed by RTT109 and regulated by ASF1 is required for replisome integrity.</title>
        <authorList>
            <person name="Han J."/>
            <person name="Zhou H."/>
            <person name="Li Z."/>
            <person name="Xu R.-M."/>
            <person name="Zhang Z."/>
        </authorList>
    </citation>
    <scope>FUNCTION</scope>
    <scope>CATALYTIC ACTIVITY</scope>
    <scope>INTERACTION WITH ASF1 AND VPS75</scope>
</reference>
<reference key="11">
    <citation type="journal article" date="2007" name="Mol. Cell">
        <title>Histone H3-K56 acetylation is catalyzed by histone chaperone-dependent complexes.</title>
        <authorList>
            <person name="Tsubota T."/>
            <person name="Berndsen C.E."/>
            <person name="Erkmann J.A."/>
            <person name="Smith C.L."/>
            <person name="Yang L."/>
            <person name="Freitas M.A."/>
            <person name="Denu J.M."/>
            <person name="Kaufman P.D."/>
        </authorList>
    </citation>
    <scope>FUNCTION</scope>
    <scope>IDENTIFICATION IN A COMPLEX WITH VPS75</scope>
    <scope>INTERACTION WITH ASF1 AND VPS75</scope>
</reference>
<reference key="12">
    <citation type="journal article" date="2007" name="Science">
        <title>Yeast Rtt109 promotes genome stability by acetylating histone H3 on lysine 56.</title>
        <authorList>
            <person name="Driscoll R."/>
            <person name="Hudson A."/>
            <person name="Jackson S.P."/>
        </authorList>
    </citation>
    <scope>FUNCTION</scope>
    <scope>CATALYTIC ACTIVITY</scope>
</reference>
<reference key="13">
    <citation type="journal article" date="2007" name="Science">
        <title>Rtt109 acetylates histone H3 lysine 56 and functions in DNA replication.</title>
        <authorList>
            <person name="Han J."/>
            <person name="Zhou H."/>
            <person name="Horazdovsky B."/>
            <person name="Zhang K."/>
            <person name="Xu R.-M."/>
            <person name="Zhang Z."/>
        </authorList>
    </citation>
    <scope>FUNCTION</scope>
    <scope>MUTAGENESIS OF ASP-89 AND 287-ASP-ASP-288</scope>
    <scope>INTERACTION WITH VPS75</scope>
</reference>
<reference key="14">
    <citation type="journal article" date="2008" name="Nat. Struct. Mol. Biol.">
        <title>Molecular functions of the histone acetyltransferase chaperone complex Rtt109-Vps75.</title>
        <authorList>
            <person name="Berndsen C.E."/>
            <person name="Tsubota T."/>
            <person name="Lindner S.E."/>
            <person name="Lee S."/>
            <person name="Holton J.M."/>
            <person name="Kaufman P.D."/>
            <person name="Keck J.L."/>
            <person name="Denu J.M."/>
        </authorList>
    </citation>
    <scope>FUNCTION</scope>
    <scope>CATALYTIC ACTIVITY</scope>
    <scope>BIOPHYSICOCHEMICAL PROPERTIES</scope>
    <scope>INTERACTION WITH HISTONE H3/H4 HETERODIMERS</scope>
    <scope>DISRUPTION PHENOTYPE</scope>
</reference>
<reference key="15">
    <citation type="journal article" date="2008" name="Proc. Natl. Acad. Sci. U.S.A.">
        <title>Acetylation in the globular core of histone H3 on lysine-56 promotes chromatin disassembly during transcriptional activation.</title>
        <authorList>
            <person name="Williams S.K."/>
            <person name="Truong D."/>
            <person name="Tyler J.K."/>
        </authorList>
    </citation>
    <scope>FUNCTION</scope>
</reference>
<reference key="16">
    <citation type="journal article" date="2008" name="Proc. Natl. Acad. Sci. U.S.A.">
        <title>Structure of Vps75 and implications for histone chaperone function.</title>
        <authorList>
            <person name="Tang Y."/>
            <person name="Meeth K."/>
            <person name="Jiang E."/>
            <person name="Luo C."/>
            <person name="Marmorstein R."/>
        </authorList>
    </citation>
    <scope>FUNCTION</scope>
    <scope>INTERACTION WITH VPS75</scope>
</reference>
<reference key="17">
    <citation type="journal article" date="2009" name="Mol. Cell">
        <title>Two-color cell array screen reveals interdependent roles for histone chaperones and a chromatin boundary regulator in histone gene repression.</title>
        <authorList>
            <person name="Fillingham J."/>
            <person name="Kainth P."/>
            <person name="Lambert J.P."/>
            <person name="van Bakel H."/>
            <person name="Tsui K."/>
            <person name="Pena-Castillo L."/>
            <person name="Nislow C."/>
            <person name="Figeys D."/>
            <person name="Hughes T.R."/>
            <person name="Greenblatt J."/>
            <person name="Andrews B.J."/>
        </authorList>
    </citation>
    <scope>FUNCTION</scope>
    <scope>DISRUPTION PHENOTYPE</scope>
</reference>
<reference key="18">
    <citation type="journal article" date="2010" name="Biochemistry">
        <title>Kinetic mechanism of the Rtt109-Vps75 histone acetyltransferase-chaperone complex.</title>
        <authorList>
            <person name="Albaugh B.N."/>
            <person name="Kolonko E.M."/>
            <person name="Denu J.M."/>
        </authorList>
    </citation>
    <scope>FUNCTION</scope>
    <scope>BIOPHYSIOCHEMICAL PROPERTIES</scope>
    <scope>IDENTIFICATION IN A COMPLEX WITH VPS75</scope>
    <scope>INTERACTION WITH VPS75</scope>
    <scope>MUTAGENESIS OF ASP-287 AND ASP-288</scope>
</reference>
<reference key="19">
    <citation type="journal article" date="2019" name="Nucleic Acids Res.">
        <title>Two factor authentication: Asf1 mediates crosstalk between H3 K14 and K56 acetylation.</title>
        <authorList>
            <person name="Cote J.M."/>
            <person name="Kuo Y.M."/>
            <person name="Henry R.A."/>
            <person name="Scherman H."/>
            <person name="Krzizike D.D."/>
            <person name="Andrews A.J."/>
        </authorList>
    </citation>
    <scope>FUNCTION</scope>
    <scope>CATALYTIC ACTIVITY</scope>
</reference>
<reference evidence="35" key="20">
    <citation type="journal article" date="2008" name="Nat. Struct. Mol. Biol.">
        <title>Fungal Rtt109 histone acetyltransferase is an unexpected structural homolog of metazoan p300/CBP.</title>
        <authorList>
            <person name="Tang Y."/>
            <person name="Holbert M.A."/>
            <person name="Wurtele H."/>
            <person name="Meeth K."/>
            <person name="Rocha W."/>
            <person name="Gharib M."/>
            <person name="Jiang E."/>
            <person name="Thibault P."/>
            <person name="Verreault A."/>
            <person name="Cole P.A."/>
            <person name="Marmorstein R."/>
        </authorList>
    </citation>
    <scope>X-RAY CRYSTALLOGRAPHY (3.10 ANGSTROMS) OF 1-129 AND 180-436 IN COMPLEX WITH ACETYL-COA</scope>
    <scope>FUNCTION</scope>
    <scope>CATALYTIC ACTIVITY</scope>
    <scope>BIOPHYSICOCHEMICAL PROPERTIES</scope>
    <scope>DISRUPTION PHENOTYPE</scope>
    <scope>ACETYLATION AT LYS-290</scope>
    <scope>MUTAGENESIS OF ASP-89; TYR-199; TRP-222; ASP-287 AND LYS-290</scope>
</reference>
<reference evidence="30" key="21">
    <citation type="journal article" date="2008" name="Proc. Natl. Acad. Sci. U.S.A.">
        <title>Molecular basis for the autoregulation of the protein acetyl transferase Rtt109.</title>
        <authorList>
            <person name="Stavropoulos P."/>
            <person name="Nagy V."/>
            <person name="Blobel G."/>
            <person name="Hoelz A."/>
        </authorList>
    </citation>
    <scope>X-RAY CRYSTALLOGRAPHY (2.00 ANGSTROMS) OF 1-127 AND 171-403 IN COMPLEX WITH ACETYL-COA</scope>
    <scope>FUNCTION</scope>
    <scope>IDENTIFICATION IN A COMPLEX WITH VPS75</scope>
    <scope>INTERACTION WITH VPS75</scope>
    <scope>DISRUPTION PHENOTYPE</scope>
    <scope>ACETYLATION AT LYS-290</scope>
    <scope>MUTAGENESIS OF GLU-66; PHE-84; PHE-285; ASP-287; ASP-288; LYS-290 AND TRP-312</scope>
</reference>
<reference evidence="28 29" key="22">
    <citation type="journal article" date="2008" name="Structure">
        <title>Structural insights into histone H3 lysine 56 acetylation by Rtt109.</title>
        <authorList>
            <person name="Lin C."/>
            <person name="Yuan Y.A."/>
        </authorList>
    </citation>
    <scope>X-RAY CRYSTALLOGRAPHY (1.9 ANGSTROMS) IN COMPLEX WITH ACETYL-COA</scope>
    <scope>FUNCTION</scope>
    <scope>CATALYTIC ACTIVITY</scope>
    <scope>ACTIVE SITE</scope>
    <scope>ACETYLATION AT LYS-290</scope>
    <scope>MUTAGENESIS OF ASP-89; ARG-194; HIS-211; TRP-221; ASP-288 AND LYS-290</scope>
</reference>
<reference evidence="33 34" key="23">
    <citation type="journal article" date="2011" name="J. Biol. Chem.">
        <title>Structure and histone binding properties of the Vps75-Rtt109 chaperone-lysine acetyltransferase complex.</title>
        <authorList>
            <person name="Su D."/>
            <person name="Hu Q."/>
            <person name="Zhou H."/>
            <person name="Thompson J.R."/>
            <person name="Xu R.M."/>
            <person name="Zhang Z."/>
            <person name="Mer G."/>
        </authorList>
    </citation>
    <scope>X-RAY CRYSTALLOGRAPHY (2.71 ANGSTROMS) OF 1-426 IN COMPLEX WITH VPS75</scope>
    <scope>INTERACTION WITH VPS75 AND HISTONE H3/H4 HETERODIMERS</scope>
</reference>
<reference evidence="31 32" key="24">
    <citation type="journal article" date="2011" name="Structure">
        <title>Structure of the Rtt109-AcCoA/Vps75 complex and implications for chaperone-mediated histone acetylation.</title>
        <authorList>
            <person name="Tang Y."/>
            <person name="Holbert M.A."/>
            <person name="Delgoshaie N."/>
            <person name="Wurtele H."/>
            <person name="Guillemette B."/>
            <person name="Meeth K."/>
            <person name="Yuan H."/>
            <person name="Drogaris P."/>
            <person name="Lee E.H."/>
            <person name="Durette C."/>
            <person name="Thibault P."/>
            <person name="Verreault A."/>
            <person name="Cole P.A."/>
            <person name="Marmorstein R."/>
        </authorList>
    </citation>
    <scope>X-RAY CRYSTALLOGRAPHY (2.80 ANGSTROMS) OF 1-129; 134-165 AND 172-404 IN COMPLEX WITH ACETYL-COA AND VPS75</scope>
    <scope>FUNCTION</scope>
    <scope>CATALYTIC ACTIVITY</scope>
    <scope>INTERACTION WITH VPS75</scope>
    <scope>DISRUPTION PHENOTYPE</scope>
    <scope>MUTAGENESIS OF LEU-148; 150-ILE-LEU-151; ARG-292; 355-ARG-LYS-356; 368-GLU--ASP-371; GLU-368; GLU-374; 378-GLU--ASN-382 AND GLU-378</scope>
</reference>
<reference evidence="36" key="25">
    <citation type="journal article" date="2018" name="Nucleic Acids Res.">
        <title>Structural characterization of the Asf1-Rtt109 interaction and its role in histone acetylation.</title>
        <authorList>
            <person name="Lercher L."/>
            <person name="Danilenko N."/>
            <person name="Kirkpatrick J."/>
            <person name="Carlomagno T."/>
        </authorList>
    </citation>
    <scope>STRUCTURE BY NMR OF 419-433</scope>
    <scope>FUNCTION</scope>
    <scope>CATALYTIC ACTIVITY</scope>
    <scope>INTERACTION WITH ASF1</scope>
</reference>
<reference evidence="37" key="26">
    <citation type="journal article" date="2019" name="Nat. Commun.">
        <title>Histone chaperone exploits intrinsic disorder to switch acetylation specificity.</title>
        <authorList>
            <person name="Danilenko N."/>
            <person name="Lercher L."/>
            <person name="Kirkpatrick J."/>
            <person name="Gabel F."/>
            <person name="Codutti L."/>
            <person name="Carlomagno T."/>
        </authorList>
    </citation>
    <scope>STRUCTURE BY NMR IN COMPLEX WITH VPS75 AND ASF1</scope>
    <scope>INTERACTION WITH ASF1 AND VPS75</scope>
    <scope>MUTAGENESIS OF 425-LYS--THR-436</scope>
</reference>
<sequence length="436" mass="50096">MSLNDFLSSVLPVSEQFEYLSLQSIPLETHAVVTPNKDDKRVPKSTIKTQHFFSLFHQGKVFFSLEVYVYVTLWDEADAERLIFVSKADTNGYCNTRVSVRDITKIILEFILSIDPNYYLQKVKPAIRSYKKISPELISAASTPARTLRILARRLKQSGSTVLKEIESPRFQQDLYLSFTCPREILTKICLFTRPASQYLFPDSSKNSKKHILNGEELMKWWGFILDRLLIECFQNDTQAKLRIPGEDPARVRSYLRGMKYPLWQVGDIFTSKENSLAVYNIPLFPDDPKARFIHQLAEEDRLLKVSLSSFWIELQERQEFKLSVTSSVMGISGYSLATPSLFPSSADVIVPKSRKQFRAIKKYITGEEYDTEEGAIEAFTNIRDFLLLRMATNLQSLTGKREHRERNQPVPASNINTLAITMLKPRKKAKALPKT</sequence>
<evidence type="ECO:0000255" key="1">
    <source>
        <dbReference type="PROSITE-ProRule" id="PRU01064"/>
    </source>
</evidence>
<evidence type="ECO:0000269" key="2">
    <source>
    </source>
</evidence>
<evidence type="ECO:0000269" key="3">
    <source>
    </source>
</evidence>
<evidence type="ECO:0000269" key="4">
    <source>
    </source>
</evidence>
<evidence type="ECO:0000269" key="5">
    <source>
    </source>
</evidence>
<evidence type="ECO:0000269" key="6">
    <source>
    </source>
</evidence>
<evidence type="ECO:0000269" key="7">
    <source>
    </source>
</evidence>
<evidence type="ECO:0000269" key="8">
    <source>
    </source>
</evidence>
<evidence type="ECO:0000269" key="9">
    <source>
    </source>
</evidence>
<evidence type="ECO:0000269" key="10">
    <source>
    </source>
</evidence>
<evidence type="ECO:0000269" key="11">
    <source>
    </source>
</evidence>
<evidence type="ECO:0000269" key="12">
    <source>
    </source>
</evidence>
<evidence type="ECO:0000269" key="13">
    <source>
    </source>
</evidence>
<evidence type="ECO:0000269" key="14">
    <source>
    </source>
</evidence>
<evidence type="ECO:0000269" key="15">
    <source>
    </source>
</evidence>
<evidence type="ECO:0000269" key="16">
    <source>
    </source>
</evidence>
<evidence type="ECO:0000269" key="17">
    <source>
    </source>
</evidence>
<evidence type="ECO:0000269" key="18">
    <source>
    </source>
</evidence>
<evidence type="ECO:0000269" key="19">
    <source>
    </source>
</evidence>
<evidence type="ECO:0000269" key="20">
    <source>
    </source>
</evidence>
<evidence type="ECO:0000269" key="21">
    <source>
    </source>
</evidence>
<evidence type="ECO:0000269" key="22">
    <source>
    </source>
</evidence>
<evidence type="ECO:0000269" key="23">
    <source>
    </source>
</evidence>
<evidence type="ECO:0000269" key="24">
    <source>
    </source>
</evidence>
<evidence type="ECO:0000303" key="25">
    <source>
    </source>
</evidence>
<evidence type="ECO:0000303" key="26">
    <source>
    </source>
</evidence>
<evidence type="ECO:0000305" key="27"/>
<evidence type="ECO:0007744" key="28">
    <source>
        <dbReference type="PDB" id="2RIM"/>
    </source>
</evidence>
<evidence type="ECO:0007744" key="29">
    <source>
        <dbReference type="PDB" id="2ZFN"/>
    </source>
</evidence>
<evidence type="ECO:0007744" key="30">
    <source>
        <dbReference type="PDB" id="3CZ7"/>
    </source>
</evidence>
<evidence type="ECO:0007744" key="31">
    <source>
        <dbReference type="PDB" id="3Q33"/>
    </source>
</evidence>
<evidence type="ECO:0007744" key="32">
    <source>
        <dbReference type="PDB" id="3Q35"/>
    </source>
</evidence>
<evidence type="ECO:0007744" key="33">
    <source>
        <dbReference type="PDB" id="3Q66"/>
    </source>
</evidence>
<evidence type="ECO:0007744" key="34">
    <source>
        <dbReference type="PDB" id="3Q68"/>
    </source>
</evidence>
<evidence type="ECO:0007744" key="35">
    <source>
        <dbReference type="PDB" id="3QM0"/>
    </source>
</evidence>
<evidence type="ECO:0007744" key="36">
    <source>
        <dbReference type="PDB" id="6F0Y"/>
    </source>
</evidence>
<evidence type="ECO:0007744" key="37">
    <source>
        <dbReference type="PDB" id="6O22"/>
    </source>
</evidence>
<evidence type="ECO:0007829" key="38">
    <source>
        <dbReference type="PDB" id="2ZFN"/>
    </source>
</evidence>
<evidence type="ECO:0007829" key="39">
    <source>
        <dbReference type="PDB" id="3CZ7"/>
    </source>
</evidence>
<evidence type="ECO:0007829" key="40">
    <source>
        <dbReference type="PDB" id="3Q66"/>
    </source>
</evidence>
<evidence type="ECO:0007829" key="41">
    <source>
        <dbReference type="PDB" id="3Q68"/>
    </source>
</evidence>
<evidence type="ECO:0007829" key="42">
    <source>
        <dbReference type="PDB" id="3QM0"/>
    </source>
</evidence>
<evidence type="ECO:0007829" key="43">
    <source>
        <dbReference type="PDB" id="6F0Y"/>
    </source>
</evidence>
<proteinExistence type="evidence at protein level"/>
<name>RT109_YEAST</name>
<protein>
    <recommendedName>
        <fullName>Histone acetyltransferase RTT109</fullName>
        <ecNumber evidence="7 10 11 14 20 22 23">2.3.1.48</ecNumber>
    </recommendedName>
    <alternativeName>
        <fullName>Regulator of Ty1 transposition protein 109</fullName>
    </alternativeName>
</protein>
<accession>Q07794</accession>
<accession>D6VY01</accession>